<proteinExistence type="inferred from homology"/>
<organism>
    <name type="scientific">Brucella suis (strain ATCC 23445 / NCTC 10510)</name>
    <dbReference type="NCBI Taxonomy" id="470137"/>
    <lineage>
        <taxon>Bacteria</taxon>
        <taxon>Pseudomonadati</taxon>
        <taxon>Pseudomonadota</taxon>
        <taxon>Alphaproteobacteria</taxon>
        <taxon>Hyphomicrobiales</taxon>
        <taxon>Brucellaceae</taxon>
        <taxon>Brucella/Ochrobactrum group</taxon>
        <taxon>Brucella</taxon>
    </lineage>
</organism>
<sequence length="337" mass="37372">MIQKNWQELIKPNKVDFITHGSRTHATVVAEPLERGFGLTLGNALRRVLLSSLRGAAVTAVQIDGVLHEFSSIPGVREDVTDIVLNIKEIAIRMEGEGPKRMVVRKEGPGVVTAGDIQTVGDVEILNPEHVICTLDEGAEIRMEFTVNTGKGYVPADRNRAEDAPIGLIPVDSLYSPVRKVSYKIENTREGQVLDYDKLTLNIETNGSVTGEDAVAYAARILQDQLSIFVNFEEPQKEAPQEQVAELAFNPALLKKVDELELSVRSANCLKTDNIVYIGDLIQKTEAEMLRTPNFGRKSLNEIKEVLASMGLHLGMEIPAWPPENIEDLAKRYEDQY</sequence>
<reference key="1">
    <citation type="submission" date="2007-12" db="EMBL/GenBank/DDBJ databases">
        <title>Brucella suis ATCC 23445 whole genome shotgun sequencing project.</title>
        <authorList>
            <person name="Setubal J.C."/>
            <person name="Bowns C."/>
            <person name="Boyle S."/>
            <person name="Crasta O.R."/>
            <person name="Czar M.J."/>
            <person name="Dharmanolla C."/>
            <person name="Gillespie J.J."/>
            <person name="Kenyon R.W."/>
            <person name="Lu J."/>
            <person name="Mane S."/>
            <person name="Mohapatra S."/>
            <person name="Nagrani S."/>
            <person name="Purkayastha A."/>
            <person name="Rajasimha H.K."/>
            <person name="Shallom J.M."/>
            <person name="Shallom S."/>
            <person name="Shukla M."/>
            <person name="Snyder E.E."/>
            <person name="Sobral B.W."/>
            <person name="Wattam A.R."/>
            <person name="Will R."/>
            <person name="Williams K."/>
            <person name="Yoo H."/>
            <person name="Bruce D."/>
            <person name="Detter C."/>
            <person name="Munk C."/>
            <person name="Brettin T.S."/>
        </authorList>
    </citation>
    <scope>NUCLEOTIDE SEQUENCE [LARGE SCALE GENOMIC DNA]</scope>
    <source>
        <strain>ATCC 23445 / NCTC 10510</strain>
    </source>
</reference>
<feature type="chain" id="PRO_1000075002" description="DNA-directed RNA polymerase subunit alpha">
    <location>
        <begin position="1"/>
        <end position="337"/>
    </location>
</feature>
<feature type="region of interest" description="Alpha N-terminal domain (alpha-NTD)" evidence="1">
    <location>
        <begin position="1"/>
        <end position="233"/>
    </location>
</feature>
<feature type="region of interest" description="Alpha C-terminal domain (alpha-CTD)" evidence="1">
    <location>
        <begin position="249"/>
        <end position="337"/>
    </location>
</feature>
<comment type="function">
    <text evidence="1">DNA-dependent RNA polymerase catalyzes the transcription of DNA into RNA using the four ribonucleoside triphosphates as substrates.</text>
</comment>
<comment type="catalytic activity">
    <reaction evidence="1">
        <text>RNA(n) + a ribonucleoside 5'-triphosphate = RNA(n+1) + diphosphate</text>
        <dbReference type="Rhea" id="RHEA:21248"/>
        <dbReference type="Rhea" id="RHEA-COMP:14527"/>
        <dbReference type="Rhea" id="RHEA-COMP:17342"/>
        <dbReference type="ChEBI" id="CHEBI:33019"/>
        <dbReference type="ChEBI" id="CHEBI:61557"/>
        <dbReference type="ChEBI" id="CHEBI:140395"/>
        <dbReference type="EC" id="2.7.7.6"/>
    </reaction>
</comment>
<comment type="subunit">
    <text evidence="1">Homodimer. The RNAP catalytic core consists of 2 alpha, 1 beta, 1 beta' and 1 omega subunit. When a sigma factor is associated with the core the holoenzyme is formed, which can initiate transcription.</text>
</comment>
<comment type="domain">
    <text evidence="1">The N-terminal domain is essential for RNAP assembly and basal transcription, whereas the C-terminal domain is involved in interaction with transcriptional regulators and with upstream promoter elements.</text>
</comment>
<comment type="similarity">
    <text evidence="1">Belongs to the RNA polymerase alpha chain family.</text>
</comment>
<name>RPOA_BRUSI</name>
<keyword id="KW-0240">DNA-directed RNA polymerase</keyword>
<keyword id="KW-0548">Nucleotidyltransferase</keyword>
<keyword id="KW-0804">Transcription</keyword>
<keyword id="KW-0808">Transferase</keyword>
<protein>
    <recommendedName>
        <fullName evidence="1">DNA-directed RNA polymerase subunit alpha</fullName>
        <shortName evidence="1">RNAP subunit alpha</shortName>
        <ecNumber evidence="1">2.7.7.6</ecNumber>
    </recommendedName>
    <alternativeName>
        <fullName evidence="1">RNA polymerase subunit alpha</fullName>
    </alternativeName>
    <alternativeName>
        <fullName evidence="1">Transcriptase subunit alpha</fullName>
    </alternativeName>
</protein>
<dbReference type="EC" id="2.7.7.6" evidence="1"/>
<dbReference type="EMBL" id="CP000911">
    <property type="protein sequence ID" value="ABY38308.1"/>
    <property type="molecule type" value="Genomic_DNA"/>
</dbReference>
<dbReference type="RefSeq" id="WP_004690913.1">
    <property type="nucleotide sequence ID" value="NC_010169.1"/>
</dbReference>
<dbReference type="SMR" id="B0CH07"/>
<dbReference type="KEGG" id="bmt:BSUIS_A1257"/>
<dbReference type="HOGENOM" id="CLU_053084_0_0_5"/>
<dbReference type="PRO" id="PR:B0CH07"/>
<dbReference type="Proteomes" id="UP000008545">
    <property type="component" value="Chromosome I"/>
</dbReference>
<dbReference type="GO" id="GO:0005737">
    <property type="term" value="C:cytoplasm"/>
    <property type="evidence" value="ECO:0007669"/>
    <property type="project" value="UniProtKB-ARBA"/>
</dbReference>
<dbReference type="GO" id="GO:0000428">
    <property type="term" value="C:DNA-directed RNA polymerase complex"/>
    <property type="evidence" value="ECO:0007669"/>
    <property type="project" value="UniProtKB-KW"/>
</dbReference>
<dbReference type="GO" id="GO:0003677">
    <property type="term" value="F:DNA binding"/>
    <property type="evidence" value="ECO:0007669"/>
    <property type="project" value="UniProtKB-UniRule"/>
</dbReference>
<dbReference type="GO" id="GO:0003899">
    <property type="term" value="F:DNA-directed RNA polymerase activity"/>
    <property type="evidence" value="ECO:0007669"/>
    <property type="project" value="UniProtKB-UniRule"/>
</dbReference>
<dbReference type="GO" id="GO:0046983">
    <property type="term" value="F:protein dimerization activity"/>
    <property type="evidence" value="ECO:0007669"/>
    <property type="project" value="InterPro"/>
</dbReference>
<dbReference type="GO" id="GO:0006351">
    <property type="term" value="P:DNA-templated transcription"/>
    <property type="evidence" value="ECO:0007669"/>
    <property type="project" value="UniProtKB-UniRule"/>
</dbReference>
<dbReference type="CDD" id="cd06928">
    <property type="entry name" value="RNAP_alpha_NTD"/>
    <property type="match status" value="1"/>
</dbReference>
<dbReference type="FunFam" id="1.10.150.20:FF:000001">
    <property type="entry name" value="DNA-directed RNA polymerase subunit alpha"/>
    <property type="match status" value="1"/>
</dbReference>
<dbReference type="FunFam" id="2.170.120.12:FF:000001">
    <property type="entry name" value="DNA-directed RNA polymerase subunit alpha"/>
    <property type="match status" value="1"/>
</dbReference>
<dbReference type="Gene3D" id="1.10.150.20">
    <property type="entry name" value="5' to 3' exonuclease, C-terminal subdomain"/>
    <property type="match status" value="1"/>
</dbReference>
<dbReference type="Gene3D" id="2.170.120.12">
    <property type="entry name" value="DNA-directed RNA polymerase, insert domain"/>
    <property type="match status" value="1"/>
</dbReference>
<dbReference type="Gene3D" id="3.30.1360.10">
    <property type="entry name" value="RNA polymerase, RBP11-like subunit"/>
    <property type="match status" value="1"/>
</dbReference>
<dbReference type="HAMAP" id="MF_00059">
    <property type="entry name" value="RNApol_bact_RpoA"/>
    <property type="match status" value="1"/>
</dbReference>
<dbReference type="InterPro" id="IPR011262">
    <property type="entry name" value="DNA-dir_RNA_pol_insert"/>
</dbReference>
<dbReference type="InterPro" id="IPR011263">
    <property type="entry name" value="DNA-dir_RNA_pol_RpoA/D/Rpb3"/>
</dbReference>
<dbReference type="InterPro" id="IPR011773">
    <property type="entry name" value="DNA-dir_RpoA"/>
</dbReference>
<dbReference type="InterPro" id="IPR036603">
    <property type="entry name" value="RBP11-like"/>
</dbReference>
<dbReference type="InterPro" id="IPR011260">
    <property type="entry name" value="RNAP_asu_C"/>
</dbReference>
<dbReference type="InterPro" id="IPR036643">
    <property type="entry name" value="RNApol_insert_sf"/>
</dbReference>
<dbReference type="NCBIfam" id="NF003513">
    <property type="entry name" value="PRK05182.1-2"/>
    <property type="match status" value="1"/>
</dbReference>
<dbReference type="NCBIfam" id="NF003519">
    <property type="entry name" value="PRK05182.2-5"/>
    <property type="match status" value="1"/>
</dbReference>
<dbReference type="NCBIfam" id="TIGR02027">
    <property type="entry name" value="rpoA"/>
    <property type="match status" value="1"/>
</dbReference>
<dbReference type="Pfam" id="PF01000">
    <property type="entry name" value="RNA_pol_A_bac"/>
    <property type="match status" value="1"/>
</dbReference>
<dbReference type="Pfam" id="PF03118">
    <property type="entry name" value="RNA_pol_A_CTD"/>
    <property type="match status" value="1"/>
</dbReference>
<dbReference type="Pfam" id="PF01193">
    <property type="entry name" value="RNA_pol_L"/>
    <property type="match status" value="1"/>
</dbReference>
<dbReference type="SMART" id="SM00662">
    <property type="entry name" value="RPOLD"/>
    <property type="match status" value="1"/>
</dbReference>
<dbReference type="SUPFAM" id="SSF47789">
    <property type="entry name" value="C-terminal domain of RNA polymerase alpha subunit"/>
    <property type="match status" value="1"/>
</dbReference>
<dbReference type="SUPFAM" id="SSF56553">
    <property type="entry name" value="Insert subdomain of RNA polymerase alpha subunit"/>
    <property type="match status" value="1"/>
</dbReference>
<dbReference type="SUPFAM" id="SSF55257">
    <property type="entry name" value="RBP11-like subunits of RNA polymerase"/>
    <property type="match status" value="1"/>
</dbReference>
<evidence type="ECO:0000255" key="1">
    <source>
        <dbReference type="HAMAP-Rule" id="MF_00059"/>
    </source>
</evidence>
<gene>
    <name evidence="1" type="primary">rpoA</name>
    <name type="ordered locus">BSUIS_A1257</name>
</gene>
<accession>B0CH07</accession>